<reference key="1">
    <citation type="journal article" date="2009" name="BMC Genomics">
        <title>Metabolic analysis of the soil microbe Dechloromonas aromatica str. RCB: indications of a surprisingly complex life-style and cryptic anaerobic pathways for aromatic degradation.</title>
        <authorList>
            <person name="Salinero K.K."/>
            <person name="Keller K."/>
            <person name="Feil W.S."/>
            <person name="Feil H."/>
            <person name="Trong S."/>
            <person name="Di Bartolo G."/>
            <person name="Lapidus A."/>
        </authorList>
    </citation>
    <scope>NUCLEOTIDE SEQUENCE [LARGE SCALE GENOMIC DNA]</scope>
    <source>
        <strain>RCB</strain>
    </source>
</reference>
<accession>Q47J97</accession>
<evidence type="ECO:0000255" key="1">
    <source>
        <dbReference type="HAMAP-Rule" id="MF_01309"/>
    </source>
</evidence>
<evidence type="ECO:0000256" key="2">
    <source>
        <dbReference type="SAM" id="MobiDB-lite"/>
    </source>
</evidence>
<evidence type="ECO:0000305" key="3"/>
<protein>
    <recommendedName>
        <fullName evidence="1">Small ribosomal subunit protein uS3</fullName>
    </recommendedName>
    <alternativeName>
        <fullName evidence="3">30S ribosomal protein S3</fullName>
    </alternativeName>
</protein>
<name>RS3_DECAR</name>
<gene>
    <name evidence="1" type="primary">rpsC</name>
    <name type="ordered locus">Daro_0325</name>
</gene>
<keyword id="KW-0687">Ribonucleoprotein</keyword>
<keyword id="KW-0689">Ribosomal protein</keyword>
<keyword id="KW-0694">RNA-binding</keyword>
<keyword id="KW-0699">rRNA-binding</keyword>
<feature type="chain" id="PRO_0000230693" description="Small ribosomal subunit protein uS3">
    <location>
        <begin position="1"/>
        <end position="261"/>
    </location>
</feature>
<feature type="domain" description="KH type-2" evidence="1">
    <location>
        <begin position="39"/>
        <end position="107"/>
    </location>
</feature>
<feature type="region of interest" description="Disordered" evidence="2">
    <location>
        <begin position="213"/>
        <end position="261"/>
    </location>
</feature>
<feature type="compositionally biased region" description="Basic and acidic residues" evidence="2">
    <location>
        <begin position="221"/>
        <end position="254"/>
    </location>
</feature>
<dbReference type="EMBL" id="CP000089">
    <property type="protein sequence ID" value="AAZ45084.1"/>
    <property type="molecule type" value="Genomic_DNA"/>
</dbReference>
<dbReference type="SMR" id="Q47J97"/>
<dbReference type="STRING" id="159087.Daro_0325"/>
<dbReference type="KEGG" id="dar:Daro_0325"/>
<dbReference type="eggNOG" id="COG0092">
    <property type="taxonomic scope" value="Bacteria"/>
</dbReference>
<dbReference type="HOGENOM" id="CLU_058591_0_2_4"/>
<dbReference type="OrthoDB" id="9806396at2"/>
<dbReference type="GO" id="GO:0022627">
    <property type="term" value="C:cytosolic small ribosomal subunit"/>
    <property type="evidence" value="ECO:0007669"/>
    <property type="project" value="TreeGrafter"/>
</dbReference>
<dbReference type="GO" id="GO:0003729">
    <property type="term" value="F:mRNA binding"/>
    <property type="evidence" value="ECO:0007669"/>
    <property type="project" value="UniProtKB-UniRule"/>
</dbReference>
<dbReference type="GO" id="GO:0019843">
    <property type="term" value="F:rRNA binding"/>
    <property type="evidence" value="ECO:0007669"/>
    <property type="project" value="UniProtKB-UniRule"/>
</dbReference>
<dbReference type="GO" id="GO:0003735">
    <property type="term" value="F:structural constituent of ribosome"/>
    <property type="evidence" value="ECO:0007669"/>
    <property type="project" value="InterPro"/>
</dbReference>
<dbReference type="GO" id="GO:0006412">
    <property type="term" value="P:translation"/>
    <property type="evidence" value="ECO:0007669"/>
    <property type="project" value="UniProtKB-UniRule"/>
</dbReference>
<dbReference type="CDD" id="cd02412">
    <property type="entry name" value="KH-II_30S_S3"/>
    <property type="match status" value="1"/>
</dbReference>
<dbReference type="FunFam" id="3.30.1140.32:FF:000006">
    <property type="entry name" value="30S ribosomal protein S3"/>
    <property type="match status" value="1"/>
</dbReference>
<dbReference type="FunFam" id="3.30.300.20:FF:000001">
    <property type="entry name" value="30S ribosomal protein S3"/>
    <property type="match status" value="1"/>
</dbReference>
<dbReference type="Gene3D" id="3.30.300.20">
    <property type="match status" value="1"/>
</dbReference>
<dbReference type="Gene3D" id="3.30.1140.32">
    <property type="entry name" value="Ribosomal protein S3, C-terminal domain"/>
    <property type="match status" value="1"/>
</dbReference>
<dbReference type="HAMAP" id="MF_01309_B">
    <property type="entry name" value="Ribosomal_uS3_B"/>
    <property type="match status" value="1"/>
</dbReference>
<dbReference type="InterPro" id="IPR004087">
    <property type="entry name" value="KH_dom"/>
</dbReference>
<dbReference type="InterPro" id="IPR015946">
    <property type="entry name" value="KH_dom-like_a/b"/>
</dbReference>
<dbReference type="InterPro" id="IPR004044">
    <property type="entry name" value="KH_dom_type_2"/>
</dbReference>
<dbReference type="InterPro" id="IPR009019">
    <property type="entry name" value="KH_sf_prok-type"/>
</dbReference>
<dbReference type="InterPro" id="IPR036419">
    <property type="entry name" value="Ribosomal_S3_C_sf"/>
</dbReference>
<dbReference type="InterPro" id="IPR005704">
    <property type="entry name" value="Ribosomal_uS3_bac-typ"/>
</dbReference>
<dbReference type="InterPro" id="IPR001351">
    <property type="entry name" value="Ribosomal_uS3_C"/>
</dbReference>
<dbReference type="InterPro" id="IPR018280">
    <property type="entry name" value="Ribosomal_uS3_CS"/>
</dbReference>
<dbReference type="NCBIfam" id="TIGR01009">
    <property type="entry name" value="rpsC_bact"/>
    <property type="match status" value="1"/>
</dbReference>
<dbReference type="PANTHER" id="PTHR11760">
    <property type="entry name" value="30S/40S RIBOSOMAL PROTEIN S3"/>
    <property type="match status" value="1"/>
</dbReference>
<dbReference type="PANTHER" id="PTHR11760:SF19">
    <property type="entry name" value="SMALL RIBOSOMAL SUBUNIT PROTEIN US3C"/>
    <property type="match status" value="1"/>
</dbReference>
<dbReference type="Pfam" id="PF07650">
    <property type="entry name" value="KH_2"/>
    <property type="match status" value="1"/>
</dbReference>
<dbReference type="Pfam" id="PF00189">
    <property type="entry name" value="Ribosomal_S3_C"/>
    <property type="match status" value="1"/>
</dbReference>
<dbReference type="SMART" id="SM00322">
    <property type="entry name" value="KH"/>
    <property type="match status" value="1"/>
</dbReference>
<dbReference type="SUPFAM" id="SSF54814">
    <property type="entry name" value="Prokaryotic type KH domain (KH-domain type II)"/>
    <property type="match status" value="1"/>
</dbReference>
<dbReference type="SUPFAM" id="SSF54821">
    <property type="entry name" value="Ribosomal protein S3 C-terminal domain"/>
    <property type="match status" value="1"/>
</dbReference>
<dbReference type="PROSITE" id="PS50823">
    <property type="entry name" value="KH_TYPE_2"/>
    <property type="match status" value="1"/>
</dbReference>
<dbReference type="PROSITE" id="PS00548">
    <property type="entry name" value="RIBOSOMAL_S3"/>
    <property type="match status" value="1"/>
</dbReference>
<proteinExistence type="inferred from homology"/>
<organism>
    <name type="scientific">Dechloromonas aromatica (strain RCB)</name>
    <dbReference type="NCBI Taxonomy" id="159087"/>
    <lineage>
        <taxon>Bacteria</taxon>
        <taxon>Pseudomonadati</taxon>
        <taxon>Pseudomonadota</taxon>
        <taxon>Betaproteobacteria</taxon>
        <taxon>Rhodocyclales</taxon>
        <taxon>Azonexaceae</taxon>
        <taxon>Dechloromonas</taxon>
    </lineage>
</organism>
<comment type="function">
    <text evidence="1">Binds the lower part of the 30S subunit head. Binds mRNA in the 70S ribosome, positioning it for translation.</text>
</comment>
<comment type="subunit">
    <text evidence="1">Part of the 30S ribosomal subunit. Forms a tight complex with proteins S10 and S14.</text>
</comment>
<comment type="similarity">
    <text evidence="1">Belongs to the universal ribosomal protein uS3 family.</text>
</comment>
<sequence>MGQKIHPTGFRLAVTKNWSSRWYANSKDFPGMLNEDIKVREYLKRKLAHASVGRVLIERPAKNARVTVYSARPGVVIGKKGEDIEQLRTDLQRIMGVPVHVSIEEIRKPEIDAQLIADSIAQQLEKRIMFRRAMKRAMQNAMRLGAQGIKVMSAGRLNGAEIARSEWYREGRVPLHTLRADIDYATSEALTTYGIIGIKVWVYKGDMLDRNEQPVAEEPAADDRRPRRTPGRPDGDKPRTRTVKKVDGAADPAKRVRKAGA</sequence>